<sequence length="633" mass="69617">MNSGSRIELLSPRLANQIAAGEVVERPASVIKELLENSIDSGAKRIDVDVEQGGVKLLRVRDDGSGISSDDLPLALARHATSKIRDLEDLERVMSLGFRGEALASISSVARLTLTSRTRDADQAWQVETEGRDMAPRVQPAAHPVGTSVEVRDLFFNTPARRKFLKAEKTEFDHLQEVIKRLALARFDVAFHLRHNGKTILSLHEAHDDAARARRVSAICGAGFLEQALPIEIERNGLRLWGWVGLPTFSRSQADLQYFFVNGRAVRDKLVAHAVRQAYRDVLFNGRHPTFVLFFEVDPSVVDVNVHPTKHEVRFRDGRMVHDFLYGTLHRTLGDVRPDDQLSAPIVTAVVRPSGPEAGEFGPQGEMSLAANLLQSPQPQPSYTAPGSGSGAGYQYQYTPRPQSAVPVAEAQAAYREFFAPLPGAEPGAPVALPEGGGDIPPLGYALAQLKGIYILAENAHGLVLVDMHAAHERIMYERLKIAMASEGLSGQPLLVPESLAVSQREADCAEEHHSVFQKLGFELQRLGPETLAIRQIPALLKQAEANRLVADVLADLMEYGTSDRIQAHINELLGTMACHGAIRANRRLALPEMNGLLRDMENTERSGQCNHGRPTWTQMGLDDLDKLFLRGR</sequence>
<proteinExistence type="inferred from homology"/>
<accession>C3KDW1</accession>
<evidence type="ECO:0000255" key="1">
    <source>
        <dbReference type="HAMAP-Rule" id="MF_00149"/>
    </source>
</evidence>
<reference key="1">
    <citation type="journal article" date="2009" name="Genome Biol.">
        <title>Genomic and genetic analyses of diversity and plant interactions of Pseudomonas fluorescens.</title>
        <authorList>
            <person name="Silby M.W."/>
            <person name="Cerdeno-Tarraga A.M."/>
            <person name="Vernikos G.S."/>
            <person name="Giddens S.R."/>
            <person name="Jackson R.W."/>
            <person name="Preston G.M."/>
            <person name="Zhang X.-X."/>
            <person name="Moon C.D."/>
            <person name="Gehrig S.M."/>
            <person name="Godfrey S.A.C."/>
            <person name="Knight C.G."/>
            <person name="Malone J.G."/>
            <person name="Robinson Z."/>
            <person name="Spiers A.J."/>
            <person name="Harris S."/>
            <person name="Challis G.L."/>
            <person name="Yaxley A.M."/>
            <person name="Harris D."/>
            <person name="Seeger K."/>
            <person name="Murphy L."/>
            <person name="Rutter S."/>
            <person name="Squares R."/>
            <person name="Quail M.A."/>
            <person name="Saunders E."/>
            <person name="Mavromatis K."/>
            <person name="Brettin T.S."/>
            <person name="Bentley S.D."/>
            <person name="Hothersall J."/>
            <person name="Stephens E."/>
            <person name="Thomas C.M."/>
            <person name="Parkhill J."/>
            <person name="Levy S.B."/>
            <person name="Rainey P.B."/>
            <person name="Thomson N.R."/>
        </authorList>
    </citation>
    <scope>NUCLEOTIDE SEQUENCE [LARGE SCALE GENOMIC DNA]</scope>
    <source>
        <strain>SBW25</strain>
    </source>
</reference>
<organism>
    <name type="scientific">Pseudomonas fluorescens (strain SBW25)</name>
    <dbReference type="NCBI Taxonomy" id="216595"/>
    <lineage>
        <taxon>Bacteria</taxon>
        <taxon>Pseudomonadati</taxon>
        <taxon>Pseudomonadota</taxon>
        <taxon>Gammaproteobacteria</taxon>
        <taxon>Pseudomonadales</taxon>
        <taxon>Pseudomonadaceae</taxon>
        <taxon>Pseudomonas</taxon>
    </lineage>
</organism>
<dbReference type="EMBL" id="AM181176">
    <property type="protein sequence ID" value="CAY46793.1"/>
    <property type="molecule type" value="Genomic_DNA"/>
</dbReference>
<dbReference type="SMR" id="C3KDW1"/>
<dbReference type="STRING" id="294.SRM1_00580"/>
<dbReference type="eggNOG" id="COG0323">
    <property type="taxonomic scope" value="Bacteria"/>
</dbReference>
<dbReference type="HOGENOM" id="CLU_004131_4_2_6"/>
<dbReference type="GO" id="GO:0032300">
    <property type="term" value="C:mismatch repair complex"/>
    <property type="evidence" value="ECO:0007669"/>
    <property type="project" value="InterPro"/>
</dbReference>
<dbReference type="GO" id="GO:0005524">
    <property type="term" value="F:ATP binding"/>
    <property type="evidence" value="ECO:0007669"/>
    <property type="project" value="InterPro"/>
</dbReference>
<dbReference type="GO" id="GO:0016887">
    <property type="term" value="F:ATP hydrolysis activity"/>
    <property type="evidence" value="ECO:0007669"/>
    <property type="project" value="InterPro"/>
</dbReference>
<dbReference type="GO" id="GO:0140664">
    <property type="term" value="F:ATP-dependent DNA damage sensor activity"/>
    <property type="evidence" value="ECO:0007669"/>
    <property type="project" value="InterPro"/>
</dbReference>
<dbReference type="GO" id="GO:0030983">
    <property type="term" value="F:mismatched DNA binding"/>
    <property type="evidence" value="ECO:0007669"/>
    <property type="project" value="InterPro"/>
</dbReference>
<dbReference type="GO" id="GO:0006298">
    <property type="term" value="P:mismatch repair"/>
    <property type="evidence" value="ECO:0007669"/>
    <property type="project" value="UniProtKB-UniRule"/>
</dbReference>
<dbReference type="CDD" id="cd16926">
    <property type="entry name" value="HATPase_MutL-MLH-PMS-like"/>
    <property type="match status" value="1"/>
</dbReference>
<dbReference type="CDD" id="cd03482">
    <property type="entry name" value="MutL_Trans_MutL"/>
    <property type="match status" value="1"/>
</dbReference>
<dbReference type="FunFam" id="3.30.230.10:FF:000013">
    <property type="entry name" value="DNA mismatch repair endonuclease MutL"/>
    <property type="match status" value="1"/>
</dbReference>
<dbReference type="FunFam" id="3.30.565.10:FF:000003">
    <property type="entry name" value="DNA mismatch repair endonuclease MutL"/>
    <property type="match status" value="1"/>
</dbReference>
<dbReference type="FunFam" id="3.30.1370.100:FF:000005">
    <property type="entry name" value="DNA mismatch repair protein MutL"/>
    <property type="match status" value="1"/>
</dbReference>
<dbReference type="Gene3D" id="3.30.230.10">
    <property type="match status" value="1"/>
</dbReference>
<dbReference type="Gene3D" id="3.30.565.10">
    <property type="entry name" value="Histidine kinase-like ATPase, C-terminal domain"/>
    <property type="match status" value="1"/>
</dbReference>
<dbReference type="Gene3D" id="3.30.1540.20">
    <property type="entry name" value="MutL, C-terminal domain, dimerisation subdomain"/>
    <property type="match status" value="1"/>
</dbReference>
<dbReference type="Gene3D" id="3.30.1370.100">
    <property type="entry name" value="MutL, C-terminal domain, regulatory subdomain"/>
    <property type="match status" value="1"/>
</dbReference>
<dbReference type="HAMAP" id="MF_00149">
    <property type="entry name" value="DNA_mis_repair"/>
    <property type="match status" value="1"/>
</dbReference>
<dbReference type="InterPro" id="IPR014762">
    <property type="entry name" value="DNA_mismatch_repair_CS"/>
</dbReference>
<dbReference type="InterPro" id="IPR020667">
    <property type="entry name" value="DNA_mismatch_repair_MutL"/>
</dbReference>
<dbReference type="InterPro" id="IPR013507">
    <property type="entry name" value="DNA_mismatch_S5_2-like"/>
</dbReference>
<dbReference type="InterPro" id="IPR036890">
    <property type="entry name" value="HATPase_C_sf"/>
</dbReference>
<dbReference type="InterPro" id="IPR002099">
    <property type="entry name" value="MutL/Mlh/PMS"/>
</dbReference>
<dbReference type="InterPro" id="IPR038973">
    <property type="entry name" value="MutL/Mlh/Pms-like"/>
</dbReference>
<dbReference type="InterPro" id="IPR014790">
    <property type="entry name" value="MutL_C"/>
</dbReference>
<dbReference type="InterPro" id="IPR042120">
    <property type="entry name" value="MutL_C_dimsub"/>
</dbReference>
<dbReference type="InterPro" id="IPR042121">
    <property type="entry name" value="MutL_C_regsub"/>
</dbReference>
<dbReference type="InterPro" id="IPR037198">
    <property type="entry name" value="MutL_C_sf"/>
</dbReference>
<dbReference type="InterPro" id="IPR020568">
    <property type="entry name" value="Ribosomal_Su5_D2-typ_SF"/>
</dbReference>
<dbReference type="InterPro" id="IPR014721">
    <property type="entry name" value="Ribsml_uS5_D2-typ_fold_subgr"/>
</dbReference>
<dbReference type="NCBIfam" id="TIGR00585">
    <property type="entry name" value="mutl"/>
    <property type="match status" value="1"/>
</dbReference>
<dbReference type="NCBIfam" id="NF000949">
    <property type="entry name" value="PRK00095.1-2"/>
    <property type="match status" value="1"/>
</dbReference>
<dbReference type="PANTHER" id="PTHR10073">
    <property type="entry name" value="DNA MISMATCH REPAIR PROTEIN MLH, PMS, MUTL"/>
    <property type="match status" value="1"/>
</dbReference>
<dbReference type="PANTHER" id="PTHR10073:SF12">
    <property type="entry name" value="DNA MISMATCH REPAIR PROTEIN MLH1"/>
    <property type="match status" value="1"/>
</dbReference>
<dbReference type="Pfam" id="PF01119">
    <property type="entry name" value="DNA_mis_repair"/>
    <property type="match status" value="1"/>
</dbReference>
<dbReference type="Pfam" id="PF13589">
    <property type="entry name" value="HATPase_c_3"/>
    <property type="match status" value="1"/>
</dbReference>
<dbReference type="Pfam" id="PF08676">
    <property type="entry name" value="MutL_C"/>
    <property type="match status" value="1"/>
</dbReference>
<dbReference type="SMART" id="SM01340">
    <property type="entry name" value="DNA_mis_repair"/>
    <property type="match status" value="1"/>
</dbReference>
<dbReference type="SMART" id="SM00853">
    <property type="entry name" value="MutL_C"/>
    <property type="match status" value="1"/>
</dbReference>
<dbReference type="SUPFAM" id="SSF55874">
    <property type="entry name" value="ATPase domain of HSP90 chaperone/DNA topoisomerase II/histidine kinase"/>
    <property type="match status" value="1"/>
</dbReference>
<dbReference type="SUPFAM" id="SSF118116">
    <property type="entry name" value="DNA mismatch repair protein MutL"/>
    <property type="match status" value="1"/>
</dbReference>
<dbReference type="SUPFAM" id="SSF54211">
    <property type="entry name" value="Ribosomal protein S5 domain 2-like"/>
    <property type="match status" value="1"/>
</dbReference>
<dbReference type="PROSITE" id="PS00058">
    <property type="entry name" value="DNA_MISMATCH_REPAIR_1"/>
    <property type="match status" value="1"/>
</dbReference>
<keyword id="KW-0227">DNA damage</keyword>
<keyword id="KW-0234">DNA repair</keyword>
<comment type="function">
    <text evidence="1">This protein is involved in the repair of mismatches in DNA. It is required for dam-dependent methyl-directed DNA mismatch repair. May act as a 'molecular matchmaker', a protein that promotes the formation of a stable complex between two or more DNA-binding proteins in an ATP-dependent manner without itself being part of a final effector complex.</text>
</comment>
<comment type="similarity">
    <text evidence="1">Belongs to the DNA mismatch repair MutL/HexB family.</text>
</comment>
<gene>
    <name evidence="1" type="primary">mutL</name>
    <name type="ordered locus">PFLU_0518</name>
</gene>
<protein>
    <recommendedName>
        <fullName evidence="1">DNA mismatch repair protein MutL</fullName>
    </recommendedName>
</protein>
<name>MUTL_PSEFS</name>
<feature type="chain" id="PRO_1000203395" description="DNA mismatch repair protein MutL">
    <location>
        <begin position="1"/>
        <end position="633"/>
    </location>
</feature>